<name>TAUB_PARPN</name>
<evidence type="ECO:0000255" key="1">
    <source>
        <dbReference type="HAMAP-Rule" id="MF_01714"/>
    </source>
</evidence>
<feature type="chain" id="PRO_0000093010" description="Taurine import ATP-binding protein TauB">
    <location>
        <begin position="1"/>
        <end position="269"/>
    </location>
</feature>
<feature type="domain" description="ABC transporter" evidence="1">
    <location>
        <begin position="4"/>
        <end position="237"/>
    </location>
</feature>
<feature type="binding site" evidence="1">
    <location>
        <begin position="42"/>
        <end position="49"/>
    </location>
    <ligand>
        <name>ATP</name>
        <dbReference type="ChEBI" id="CHEBI:30616"/>
    </ligand>
</feature>
<feature type="sequence variant" description="In strain: DSM 65.">
    <original>A</original>
    <variation>V</variation>
    <location>
        <position position="40"/>
    </location>
</feature>
<feature type="sequence variant" description="In strain: DSM 65.">
    <original>D</original>
    <variation>G</variation>
    <location>
        <position position="70"/>
    </location>
</feature>
<feature type="sequence variant" description="In strain: DSM 65.">
    <original>A</original>
    <variation>T</variation>
    <location>
        <position position="74"/>
    </location>
</feature>
<feature type="sequence variant" description="In strain: DSM 65.">
    <original>E</original>
    <variation>D</variation>
    <location>
        <position position="79"/>
    </location>
</feature>
<feature type="sequence variant" description="In strain: DSM 65.">
    <original>Q</original>
    <variation>R</variation>
    <location>
        <position position="264"/>
    </location>
</feature>
<keyword id="KW-0067">ATP-binding</keyword>
<keyword id="KW-0997">Cell inner membrane</keyword>
<keyword id="KW-1003">Cell membrane</keyword>
<keyword id="KW-0472">Membrane</keyword>
<keyword id="KW-0547">Nucleotide-binding</keyword>
<keyword id="KW-1278">Translocase</keyword>
<keyword id="KW-0813">Transport</keyword>
<dbReference type="EC" id="7.6.2.7" evidence="1"/>
<dbReference type="EMBL" id="AY498614">
    <property type="protein sequence ID" value="AAS78791.1"/>
    <property type="molecule type" value="Genomic_DNA"/>
</dbReference>
<dbReference type="EMBL" id="AY498615">
    <property type="protein sequence ID" value="AAS78800.1"/>
    <property type="molecule type" value="Genomic_DNA"/>
</dbReference>
<dbReference type="SMR" id="Q6RH47"/>
<dbReference type="STRING" id="82367.SAMN04244567_03310"/>
<dbReference type="eggNOG" id="COG4525">
    <property type="taxonomic scope" value="Bacteria"/>
</dbReference>
<dbReference type="BRENDA" id="1.4.99.2">
    <property type="organism ID" value="4531"/>
</dbReference>
<dbReference type="GO" id="GO:0005886">
    <property type="term" value="C:plasma membrane"/>
    <property type="evidence" value="ECO:0007669"/>
    <property type="project" value="UniProtKB-SubCell"/>
</dbReference>
<dbReference type="GO" id="GO:0015411">
    <property type="term" value="F:ABC-type taurine transporter transporter activity"/>
    <property type="evidence" value="ECO:0007669"/>
    <property type="project" value="UniProtKB-EC"/>
</dbReference>
<dbReference type="GO" id="GO:0005524">
    <property type="term" value="F:ATP binding"/>
    <property type="evidence" value="ECO:0007669"/>
    <property type="project" value="UniProtKB-KW"/>
</dbReference>
<dbReference type="GO" id="GO:0016887">
    <property type="term" value="F:ATP hydrolysis activity"/>
    <property type="evidence" value="ECO:0007669"/>
    <property type="project" value="InterPro"/>
</dbReference>
<dbReference type="CDD" id="cd03293">
    <property type="entry name" value="ABC_NrtD_SsuB_transporters"/>
    <property type="match status" value="1"/>
</dbReference>
<dbReference type="Gene3D" id="3.40.50.300">
    <property type="entry name" value="P-loop containing nucleotide triphosphate hydrolases"/>
    <property type="match status" value="1"/>
</dbReference>
<dbReference type="InterPro" id="IPR003593">
    <property type="entry name" value="AAA+_ATPase"/>
</dbReference>
<dbReference type="InterPro" id="IPR003439">
    <property type="entry name" value="ABC_transporter-like_ATP-bd"/>
</dbReference>
<dbReference type="InterPro" id="IPR017871">
    <property type="entry name" value="ABC_transporter-like_CS"/>
</dbReference>
<dbReference type="InterPro" id="IPR050166">
    <property type="entry name" value="ABC_transporter_ATP-bind"/>
</dbReference>
<dbReference type="InterPro" id="IPR027417">
    <property type="entry name" value="P-loop_NTPase"/>
</dbReference>
<dbReference type="PANTHER" id="PTHR42788:SF18">
    <property type="entry name" value="TAURINE IMPORT ATP-BINDING PROTEIN TAUB"/>
    <property type="match status" value="1"/>
</dbReference>
<dbReference type="PANTHER" id="PTHR42788">
    <property type="entry name" value="TAURINE IMPORT ATP-BINDING PROTEIN-RELATED"/>
    <property type="match status" value="1"/>
</dbReference>
<dbReference type="Pfam" id="PF00005">
    <property type="entry name" value="ABC_tran"/>
    <property type="match status" value="1"/>
</dbReference>
<dbReference type="SMART" id="SM00382">
    <property type="entry name" value="AAA"/>
    <property type="match status" value="1"/>
</dbReference>
<dbReference type="SUPFAM" id="SSF52540">
    <property type="entry name" value="P-loop containing nucleoside triphosphate hydrolases"/>
    <property type="match status" value="1"/>
</dbReference>
<dbReference type="PROSITE" id="PS00211">
    <property type="entry name" value="ABC_TRANSPORTER_1"/>
    <property type="match status" value="1"/>
</dbReference>
<dbReference type="PROSITE" id="PS50893">
    <property type="entry name" value="ABC_TRANSPORTER_2"/>
    <property type="match status" value="1"/>
</dbReference>
<dbReference type="PROSITE" id="PS51250">
    <property type="entry name" value="TAUB"/>
    <property type="match status" value="1"/>
</dbReference>
<accession>Q6RH47</accession>
<accession>Q6RH56</accession>
<organism>
    <name type="scientific">Paracoccus pantotrophus</name>
    <name type="common">Thiosphaera pantotropha</name>
    <dbReference type="NCBI Taxonomy" id="82367"/>
    <lineage>
        <taxon>Bacteria</taxon>
        <taxon>Pseudomonadati</taxon>
        <taxon>Pseudomonadota</taxon>
        <taxon>Alphaproteobacteria</taxon>
        <taxon>Rhodobacterales</taxon>
        <taxon>Paracoccaceae</taxon>
        <taxon>Paracoccus</taxon>
    </lineage>
</organism>
<comment type="function">
    <text evidence="1">Part of the ABC transporter complex TauABC involved in taurine import. Responsible for energy coupling to the transport system.</text>
</comment>
<comment type="catalytic activity">
    <reaction evidence="1">
        <text>taurine(out) + ATP + H2O = taurine(in) + ADP + phosphate + H(+)</text>
        <dbReference type="Rhea" id="RHEA:14613"/>
        <dbReference type="ChEBI" id="CHEBI:15377"/>
        <dbReference type="ChEBI" id="CHEBI:15378"/>
        <dbReference type="ChEBI" id="CHEBI:30616"/>
        <dbReference type="ChEBI" id="CHEBI:43474"/>
        <dbReference type="ChEBI" id="CHEBI:456216"/>
        <dbReference type="ChEBI" id="CHEBI:507393"/>
        <dbReference type="EC" id="7.6.2.7"/>
    </reaction>
</comment>
<comment type="subunit">
    <text evidence="1">The complex is composed of two ATP-binding proteins (TauB), two transmembrane proteins (TauC) and a solute-binding protein (TauA).</text>
</comment>
<comment type="subcellular location">
    <subcellularLocation>
        <location evidence="1">Cell inner membrane</location>
        <topology evidence="1">Peripheral membrane protein</topology>
    </subcellularLocation>
</comment>
<comment type="similarity">
    <text evidence="1">Belongs to the ABC transporter superfamily. Taurine importer (TC 3.A.1.17.1) family.</text>
</comment>
<sequence length="269" mass="29674">MQTLKVSDVSLIYPGHHKGAPVTALKGVNLEVKSGDFVVALGASGCGKTTLLNLMAGFMAPSAGQITLGDRPVAGPGAERGVVFQKHALLPWLNVIDNVEFGLKLQGVDARTRRERAVKNLALVGLQDFHKHMIYHLSGGMQQRVGIARALTCDPAMLLMDEPMAALDALTRETVQELLLQIWQQTDKMYFFITHSVEEALFLGSRLIVMSPRPGRITHTYELDFNRRFLAEGNARAIKSSPDFIEMREQILGIIYGDERAGEQEKIHA</sequence>
<proteinExistence type="inferred from homology"/>
<protein>
    <recommendedName>
        <fullName evidence="1">Taurine import ATP-binding protein TauB</fullName>
        <ecNumber evidence="1">7.6.2.7</ecNumber>
    </recommendedName>
</protein>
<gene>
    <name evidence="1" type="primary">tauB</name>
</gene>
<reference key="1">
    <citation type="journal article" date="2004" name="Microbiology">
        <title>Enzymes and genes of taurine and isethionate dissimilation in Paracoccus denitrificans.</title>
        <authorList>
            <person name="Brueggemann C."/>
            <person name="Denger K."/>
            <person name="Cook A.M."/>
            <person name="Ruff J."/>
        </authorList>
    </citation>
    <scope>NUCLEOTIDE SEQUENCE [GENOMIC DNA]</scope>
    <source>
        <strain>ATCC 17741 / DSM 65 / LMG 4218</strain>
        <strain>DSM 12449 / NKNCYSA</strain>
    </source>
</reference>